<organism>
    <name type="scientific">Danio rerio</name>
    <name type="common">Zebrafish</name>
    <name type="synonym">Brachydanio rerio</name>
    <dbReference type="NCBI Taxonomy" id="7955"/>
    <lineage>
        <taxon>Eukaryota</taxon>
        <taxon>Metazoa</taxon>
        <taxon>Chordata</taxon>
        <taxon>Craniata</taxon>
        <taxon>Vertebrata</taxon>
        <taxon>Euteleostomi</taxon>
        <taxon>Actinopterygii</taxon>
        <taxon>Neopterygii</taxon>
        <taxon>Teleostei</taxon>
        <taxon>Ostariophysi</taxon>
        <taxon>Cypriniformes</taxon>
        <taxon>Danionidae</taxon>
        <taxon>Danioninae</taxon>
        <taxon>Danio</taxon>
    </lineage>
</organism>
<protein>
    <recommendedName>
        <fullName>Vacuolar protein-sorting-associated protein 25</fullName>
    </recommendedName>
    <alternativeName>
        <fullName>ESCRT-II complex subunit VPS25</fullName>
    </alternativeName>
</protein>
<gene>
    <name type="primary">vps25</name>
</gene>
<proteinExistence type="evidence at transcript level"/>
<evidence type="ECO:0000250" key="1"/>
<evidence type="ECO:0000305" key="2"/>
<name>VPS25_DANRE</name>
<sequence>MSFEWPWQYNFPPFFTLQPNVDTRQKQLAAWCSLVLSYCRHRKLYTLDVLEAQESPVFNNKKIERKLSVEAIQVVFEELRKKGNLEWLDKNKSRCLIMWRRPEEWGKLIYQWVSKNGMVNSVFTLYELANGDDTEKEEFHGLEDWMLLRSLQALQTDGKAEIITMDDGKGVKFF</sequence>
<comment type="function">
    <text evidence="1">Component of the ESCRT-II complex (endosomal sorting complex required for transport II), which is required for multivesicular body (MVB) formation and sorting of endosomal cargo proteins into MVBs. The MVB pathway mediates delivery of transmembrane proteins into the lumen of the lysosome for degradation. The ESCRT-II complex is probably involved in the recruitment of the ESCRT-III complex (By similarity).</text>
</comment>
<comment type="subunit">
    <text evidence="1">Component of the endosomal sorting complex required for transport II (ESCRT-II), composed of SNF8, VPS36 and 2 copies of VPS25.</text>
</comment>
<comment type="subcellular location">
    <subcellularLocation>
        <location evidence="1">Cytoplasm</location>
    </subcellularLocation>
</comment>
<comment type="similarity">
    <text evidence="2">Belongs to the VPS25 family.</text>
</comment>
<comment type="sequence caution" evidence="2">
    <conflict type="erroneous initiation">
        <sequence resource="EMBL-CDS" id="AAH67612"/>
    </conflict>
</comment>
<accession>Q6NWF4</accession>
<keyword id="KW-0963">Cytoplasm</keyword>
<keyword id="KW-0653">Protein transport</keyword>
<keyword id="KW-1185">Reference proteome</keyword>
<keyword id="KW-0813">Transport</keyword>
<reference key="1">
    <citation type="submission" date="2004-03" db="EMBL/GenBank/DDBJ databases">
        <authorList>
            <consortium name="NIH - Zebrafish Gene Collection (ZGC) project"/>
        </authorList>
    </citation>
    <scope>NUCLEOTIDE SEQUENCE [LARGE SCALE MRNA]</scope>
    <source>
        <tissue>Kidney</tissue>
    </source>
</reference>
<dbReference type="EMBL" id="BC067612">
    <property type="protein sequence ID" value="AAH67612.1"/>
    <property type="status" value="ALT_INIT"/>
    <property type="molecule type" value="mRNA"/>
</dbReference>
<dbReference type="SMR" id="Q6NWF4"/>
<dbReference type="FunCoup" id="Q6NWF4">
    <property type="interactions" value="2686"/>
</dbReference>
<dbReference type="STRING" id="7955.ENSDARP00000126886"/>
<dbReference type="PaxDb" id="7955-ENSDARP00000126886"/>
<dbReference type="AGR" id="ZFIN:ZDB-GENE-050506-30"/>
<dbReference type="ZFIN" id="ZDB-GENE-050506-30">
    <property type="gene designation" value="vps25"/>
</dbReference>
<dbReference type="eggNOG" id="KOG4068">
    <property type="taxonomic scope" value="Eukaryota"/>
</dbReference>
<dbReference type="InParanoid" id="Q6NWF4"/>
<dbReference type="OrthoDB" id="245150at2759"/>
<dbReference type="PhylomeDB" id="Q6NWF4"/>
<dbReference type="Reactome" id="R-DRE-917729">
    <property type="pathway name" value="Endosomal Sorting Complex Required For Transport (ESCRT)"/>
</dbReference>
<dbReference type="PRO" id="PR:Q6NWF4"/>
<dbReference type="Proteomes" id="UP000000437">
    <property type="component" value="Unplaced"/>
</dbReference>
<dbReference type="GO" id="GO:0000814">
    <property type="term" value="C:ESCRT II complex"/>
    <property type="evidence" value="ECO:0000318"/>
    <property type="project" value="GO_Central"/>
</dbReference>
<dbReference type="GO" id="GO:0042803">
    <property type="term" value="F:protein homodimerization activity"/>
    <property type="evidence" value="ECO:0000318"/>
    <property type="project" value="GO_Central"/>
</dbReference>
<dbReference type="GO" id="GO:0005198">
    <property type="term" value="F:structural molecule activity"/>
    <property type="evidence" value="ECO:0000318"/>
    <property type="project" value="GO_Central"/>
</dbReference>
<dbReference type="GO" id="GO:0043328">
    <property type="term" value="P:protein transport to vacuole involved in ubiquitin-dependent protein catabolic process via the multivesicular body sorting pathway"/>
    <property type="evidence" value="ECO:0000318"/>
    <property type="project" value="GO_Central"/>
</dbReference>
<dbReference type="FunFam" id="1.10.10.10:FF:000141">
    <property type="entry name" value="vacuolar protein-sorting-associated protein 25"/>
    <property type="match status" value="1"/>
</dbReference>
<dbReference type="FunFam" id="1.10.10.570:FF:000001">
    <property type="entry name" value="vacuolar protein-sorting-associated protein 25"/>
    <property type="match status" value="1"/>
</dbReference>
<dbReference type="Gene3D" id="1.10.10.570">
    <property type="entry name" value="Winged helix' DNA-binding domain. Chain C. Domain 1"/>
    <property type="match status" value="1"/>
</dbReference>
<dbReference type="Gene3D" id="1.10.10.10">
    <property type="entry name" value="Winged helix-like DNA-binding domain superfamily/Winged helix DNA-binding domain"/>
    <property type="match status" value="1"/>
</dbReference>
<dbReference type="InterPro" id="IPR008570">
    <property type="entry name" value="ESCRT-II_cplx_Vps25-sub"/>
</dbReference>
<dbReference type="InterPro" id="IPR014041">
    <property type="entry name" value="ESCRT-II_cplx_Vps25-sub_N"/>
</dbReference>
<dbReference type="InterPro" id="IPR036388">
    <property type="entry name" value="WH-like_DNA-bd_sf"/>
</dbReference>
<dbReference type="InterPro" id="IPR036390">
    <property type="entry name" value="WH_DNA-bd_sf"/>
</dbReference>
<dbReference type="PANTHER" id="PTHR13149">
    <property type="entry name" value="VACUOLAR PROTEIN SORTING-ASSOCIATED PROTEIN VPS25"/>
    <property type="match status" value="1"/>
</dbReference>
<dbReference type="PANTHER" id="PTHR13149:SF0">
    <property type="entry name" value="VACUOLAR PROTEIN-SORTING-ASSOCIATED PROTEIN 25"/>
    <property type="match status" value="1"/>
</dbReference>
<dbReference type="Pfam" id="PF05871">
    <property type="entry name" value="ESCRT-II"/>
    <property type="match status" value="1"/>
</dbReference>
<dbReference type="SUPFAM" id="SSF46785">
    <property type="entry name" value="Winged helix' DNA-binding domain"/>
    <property type="match status" value="2"/>
</dbReference>
<feature type="chain" id="PRO_0000215219" description="Vacuolar protein-sorting-associated protein 25">
    <location>
        <begin position="1"/>
        <end position="174"/>
    </location>
</feature>